<keyword id="KW-0255">Endonuclease</keyword>
<keyword id="KW-0378">Hydrolase</keyword>
<keyword id="KW-0479">Metal-binding</keyword>
<keyword id="KW-0540">Nuclease</keyword>
<keyword id="KW-0819">tRNA processing</keyword>
<keyword id="KW-0862">Zinc</keyword>
<accession>Q48TY8</accession>
<feature type="chain" id="PRO_1000070340" description="Ribonuclease Z">
    <location>
        <begin position="1"/>
        <end position="309"/>
    </location>
</feature>
<feature type="active site" description="Proton acceptor" evidence="1">
    <location>
        <position position="67"/>
    </location>
</feature>
<feature type="binding site" evidence="1">
    <location>
        <position position="63"/>
    </location>
    <ligand>
        <name>Zn(2+)</name>
        <dbReference type="ChEBI" id="CHEBI:29105"/>
        <label>1</label>
        <note>catalytic</note>
    </ligand>
</feature>
<feature type="binding site" evidence="1">
    <location>
        <position position="65"/>
    </location>
    <ligand>
        <name>Zn(2+)</name>
        <dbReference type="ChEBI" id="CHEBI:29105"/>
        <label>1</label>
        <note>catalytic</note>
    </ligand>
</feature>
<feature type="binding site" evidence="1">
    <location>
        <position position="67"/>
    </location>
    <ligand>
        <name>Zn(2+)</name>
        <dbReference type="ChEBI" id="CHEBI:29105"/>
        <label>2</label>
        <note>catalytic</note>
    </ligand>
</feature>
<feature type="binding site" evidence="1">
    <location>
        <position position="68"/>
    </location>
    <ligand>
        <name>Zn(2+)</name>
        <dbReference type="ChEBI" id="CHEBI:29105"/>
        <label>2</label>
        <note>catalytic</note>
    </ligand>
</feature>
<feature type="binding site" evidence="1">
    <location>
        <position position="145"/>
    </location>
    <ligand>
        <name>Zn(2+)</name>
        <dbReference type="ChEBI" id="CHEBI:29105"/>
        <label>1</label>
        <note>catalytic</note>
    </ligand>
</feature>
<feature type="binding site" evidence="1">
    <location>
        <position position="216"/>
    </location>
    <ligand>
        <name>Zn(2+)</name>
        <dbReference type="ChEBI" id="CHEBI:29105"/>
        <label>1</label>
        <note>catalytic</note>
    </ligand>
</feature>
<feature type="binding site" evidence="1">
    <location>
        <position position="216"/>
    </location>
    <ligand>
        <name>Zn(2+)</name>
        <dbReference type="ChEBI" id="CHEBI:29105"/>
        <label>2</label>
        <note>catalytic</note>
    </ligand>
</feature>
<feature type="binding site" evidence="1">
    <location>
        <position position="274"/>
    </location>
    <ligand>
        <name>Zn(2+)</name>
        <dbReference type="ChEBI" id="CHEBI:29105"/>
        <label>2</label>
        <note>catalytic</note>
    </ligand>
</feature>
<dbReference type="EC" id="3.1.26.11" evidence="1"/>
<dbReference type="EMBL" id="CP000056">
    <property type="protein sequence ID" value="AAX71818.1"/>
    <property type="molecule type" value="Genomic_DNA"/>
</dbReference>
<dbReference type="RefSeq" id="WP_009881223.1">
    <property type="nucleotide sequence ID" value="NC_007296.2"/>
</dbReference>
<dbReference type="SMR" id="Q48TY8"/>
<dbReference type="GeneID" id="69900974"/>
<dbReference type="KEGG" id="spb:M28_Spy0705"/>
<dbReference type="HOGENOM" id="CLU_031317_2_0_9"/>
<dbReference type="GO" id="GO:0042781">
    <property type="term" value="F:3'-tRNA processing endoribonuclease activity"/>
    <property type="evidence" value="ECO:0007669"/>
    <property type="project" value="UniProtKB-UniRule"/>
</dbReference>
<dbReference type="GO" id="GO:0008270">
    <property type="term" value="F:zinc ion binding"/>
    <property type="evidence" value="ECO:0007669"/>
    <property type="project" value="UniProtKB-UniRule"/>
</dbReference>
<dbReference type="CDD" id="cd07717">
    <property type="entry name" value="RNaseZ_ZiPD-like_MBL-fold"/>
    <property type="match status" value="1"/>
</dbReference>
<dbReference type="FunFam" id="3.60.15.10:FF:000002">
    <property type="entry name" value="Ribonuclease Z"/>
    <property type="match status" value="1"/>
</dbReference>
<dbReference type="Gene3D" id="3.60.15.10">
    <property type="entry name" value="Ribonuclease Z/Hydroxyacylglutathione hydrolase-like"/>
    <property type="match status" value="1"/>
</dbReference>
<dbReference type="HAMAP" id="MF_01818">
    <property type="entry name" value="RNase_Z_BN"/>
    <property type="match status" value="1"/>
</dbReference>
<dbReference type="InterPro" id="IPR001279">
    <property type="entry name" value="Metallo-B-lactamas"/>
</dbReference>
<dbReference type="InterPro" id="IPR036866">
    <property type="entry name" value="RibonucZ/Hydroxyglut_hydro"/>
</dbReference>
<dbReference type="InterPro" id="IPR013471">
    <property type="entry name" value="RNase_Z/BN"/>
</dbReference>
<dbReference type="NCBIfam" id="NF000801">
    <property type="entry name" value="PRK00055.1-3"/>
    <property type="match status" value="1"/>
</dbReference>
<dbReference type="NCBIfam" id="TIGR02651">
    <property type="entry name" value="RNase_Z"/>
    <property type="match status" value="1"/>
</dbReference>
<dbReference type="PANTHER" id="PTHR46018">
    <property type="entry name" value="ZINC PHOSPHODIESTERASE ELAC PROTEIN 1"/>
    <property type="match status" value="1"/>
</dbReference>
<dbReference type="PANTHER" id="PTHR46018:SF2">
    <property type="entry name" value="ZINC PHOSPHODIESTERASE ELAC PROTEIN 1"/>
    <property type="match status" value="1"/>
</dbReference>
<dbReference type="Pfam" id="PF00753">
    <property type="entry name" value="Lactamase_B"/>
    <property type="match status" value="1"/>
</dbReference>
<dbReference type="SUPFAM" id="SSF56281">
    <property type="entry name" value="Metallo-hydrolase/oxidoreductase"/>
    <property type="match status" value="1"/>
</dbReference>
<comment type="function">
    <text evidence="1">Zinc phosphodiesterase, which displays some tRNA 3'-processing endonuclease activity. Probably involved in tRNA maturation, by removing a 3'-trailer from precursor tRNA.</text>
</comment>
<comment type="catalytic activity">
    <reaction evidence="1">
        <text>Endonucleolytic cleavage of RNA, removing extra 3' nucleotides from tRNA precursor, generating 3' termini of tRNAs. A 3'-hydroxy group is left at the tRNA terminus and a 5'-phosphoryl group is left at the trailer molecule.</text>
        <dbReference type="EC" id="3.1.26.11"/>
    </reaction>
</comment>
<comment type="cofactor">
    <cofactor evidence="1">
        <name>Zn(2+)</name>
        <dbReference type="ChEBI" id="CHEBI:29105"/>
    </cofactor>
    <text evidence="1">Binds 2 Zn(2+) ions.</text>
</comment>
<comment type="subunit">
    <text evidence="1">Homodimer.</text>
</comment>
<comment type="similarity">
    <text evidence="1">Belongs to the RNase Z family.</text>
</comment>
<name>RNZ_STRPM</name>
<reference key="1">
    <citation type="journal article" date="2005" name="J. Infect. Dis.">
        <title>Genome sequence of a serotype M28 strain of group A Streptococcus: potential new insights into puerperal sepsis and bacterial disease specificity.</title>
        <authorList>
            <person name="Green N.M."/>
            <person name="Zhang S."/>
            <person name="Porcella S.F."/>
            <person name="Nagiec M.J."/>
            <person name="Barbian K.D."/>
            <person name="Beres S.B."/>
            <person name="Lefebvre R.B."/>
            <person name="Musser J.M."/>
        </authorList>
    </citation>
    <scope>NUCLEOTIDE SEQUENCE [LARGE SCALE GENOMIC DNA]</scope>
    <source>
        <strain>MGAS6180</strain>
    </source>
</reference>
<sequence>MELQFLGTGAGQPAKQRNVSSLALKLLDEINEVWMFDCGEGTQRQILETTIKPRKIRKIFITHLHGDHIFGLPGFLSSRSFQASEEQTDLDIYGPIGIKTYVLTSLKVSGARVPYQIHFHEFDDKSLGKIMETDKFVVYAERLAHTIFCMGYRVVQKDLEGTLDAEALKAAGVPFGPLFGKIKNGQDVELEDGRLICAKDYISAPKKGKIITIIGDTRKTSASVKLAKDADVLVHESTYGKGDERIARNHGHSTNMQAAQIAHEAGAKRLLLNHVSARFLGRDCRQMEKDAATIFENVKMVQDLEEVII</sequence>
<proteinExistence type="inferred from homology"/>
<evidence type="ECO:0000255" key="1">
    <source>
        <dbReference type="HAMAP-Rule" id="MF_01818"/>
    </source>
</evidence>
<gene>
    <name evidence="1" type="primary">rnz</name>
    <name type="ordered locus">M28_Spy0705</name>
</gene>
<protein>
    <recommendedName>
        <fullName evidence="1">Ribonuclease Z</fullName>
        <shortName evidence="1">RNase Z</shortName>
        <ecNumber evidence="1">3.1.26.11</ecNumber>
    </recommendedName>
    <alternativeName>
        <fullName evidence="1">tRNA 3 endonuclease</fullName>
    </alternativeName>
    <alternativeName>
        <fullName evidence="1">tRNase Z</fullName>
    </alternativeName>
</protein>
<organism>
    <name type="scientific">Streptococcus pyogenes serotype M28 (strain MGAS6180)</name>
    <dbReference type="NCBI Taxonomy" id="319701"/>
    <lineage>
        <taxon>Bacteria</taxon>
        <taxon>Bacillati</taxon>
        <taxon>Bacillota</taxon>
        <taxon>Bacilli</taxon>
        <taxon>Lactobacillales</taxon>
        <taxon>Streptococcaceae</taxon>
        <taxon>Streptococcus</taxon>
    </lineage>
</organism>